<evidence type="ECO:0000255" key="1">
    <source>
        <dbReference type="HAMAP-Rule" id="MF_00060"/>
    </source>
</evidence>
<accession>B9MFW6</accession>
<sequence>MKILISNDDGYQAPGIVALHDALKTIADVEVVAPEHNNSAKSNALTLHSPLYVQTAHNGFRYVNGTPADCVHIALTGLLGYRPDLVVSGINNGANMGDDTIYSGTVGAAMEGYLFGIPSIAFSQVDKGWGEIESAARKAREIVQQMDRQNLVGEAPWLLNVNIPNMPYDALRPLRMCRLGRRHAAERVIEQQSPRGELMYWIGGAGAAKDAAEGTDFHATAHGHVSVTPLKVDLTDYDGLGYWAQTVARLVPAQASGEVA</sequence>
<keyword id="KW-0963">Cytoplasm</keyword>
<keyword id="KW-0378">Hydrolase</keyword>
<keyword id="KW-0479">Metal-binding</keyword>
<keyword id="KW-0547">Nucleotide-binding</keyword>
<keyword id="KW-1185">Reference proteome</keyword>
<feature type="chain" id="PRO_1000196596" description="5'-nucleotidase SurE">
    <location>
        <begin position="1"/>
        <end position="260"/>
    </location>
</feature>
<feature type="binding site" evidence="1">
    <location>
        <position position="8"/>
    </location>
    <ligand>
        <name>a divalent metal cation</name>
        <dbReference type="ChEBI" id="CHEBI:60240"/>
    </ligand>
</feature>
<feature type="binding site" evidence="1">
    <location>
        <position position="9"/>
    </location>
    <ligand>
        <name>a divalent metal cation</name>
        <dbReference type="ChEBI" id="CHEBI:60240"/>
    </ligand>
</feature>
<feature type="binding site" evidence="1">
    <location>
        <position position="39"/>
    </location>
    <ligand>
        <name>a divalent metal cation</name>
        <dbReference type="ChEBI" id="CHEBI:60240"/>
    </ligand>
</feature>
<feature type="binding site" evidence="1">
    <location>
        <position position="91"/>
    </location>
    <ligand>
        <name>a divalent metal cation</name>
        <dbReference type="ChEBI" id="CHEBI:60240"/>
    </ligand>
</feature>
<gene>
    <name evidence="1" type="primary">surE</name>
    <name type="ordered locus">Dtpsy_1080</name>
</gene>
<protein>
    <recommendedName>
        <fullName evidence="1">5'-nucleotidase SurE</fullName>
        <ecNumber evidence="1">3.1.3.5</ecNumber>
    </recommendedName>
    <alternativeName>
        <fullName evidence="1">Nucleoside 5'-monophosphate phosphohydrolase</fullName>
    </alternativeName>
</protein>
<proteinExistence type="inferred from homology"/>
<organism>
    <name type="scientific">Acidovorax ebreus (strain TPSY)</name>
    <name type="common">Diaphorobacter sp. (strain TPSY)</name>
    <dbReference type="NCBI Taxonomy" id="535289"/>
    <lineage>
        <taxon>Bacteria</taxon>
        <taxon>Pseudomonadati</taxon>
        <taxon>Pseudomonadota</taxon>
        <taxon>Betaproteobacteria</taxon>
        <taxon>Burkholderiales</taxon>
        <taxon>Comamonadaceae</taxon>
        <taxon>Diaphorobacter</taxon>
    </lineage>
</organism>
<dbReference type="EC" id="3.1.3.5" evidence="1"/>
<dbReference type="EMBL" id="CP001392">
    <property type="protein sequence ID" value="ACM32557.1"/>
    <property type="molecule type" value="Genomic_DNA"/>
</dbReference>
<dbReference type="RefSeq" id="WP_015912780.1">
    <property type="nucleotide sequence ID" value="NC_011992.1"/>
</dbReference>
<dbReference type="SMR" id="B9MFW6"/>
<dbReference type="KEGG" id="dia:Dtpsy_1080"/>
<dbReference type="eggNOG" id="COG0496">
    <property type="taxonomic scope" value="Bacteria"/>
</dbReference>
<dbReference type="HOGENOM" id="CLU_045192_1_2_4"/>
<dbReference type="Proteomes" id="UP000000450">
    <property type="component" value="Chromosome"/>
</dbReference>
<dbReference type="GO" id="GO:0005737">
    <property type="term" value="C:cytoplasm"/>
    <property type="evidence" value="ECO:0007669"/>
    <property type="project" value="UniProtKB-SubCell"/>
</dbReference>
<dbReference type="GO" id="GO:0008254">
    <property type="term" value="F:3'-nucleotidase activity"/>
    <property type="evidence" value="ECO:0007669"/>
    <property type="project" value="TreeGrafter"/>
</dbReference>
<dbReference type="GO" id="GO:0008253">
    <property type="term" value="F:5'-nucleotidase activity"/>
    <property type="evidence" value="ECO:0007669"/>
    <property type="project" value="UniProtKB-UniRule"/>
</dbReference>
<dbReference type="GO" id="GO:0004309">
    <property type="term" value="F:exopolyphosphatase activity"/>
    <property type="evidence" value="ECO:0007669"/>
    <property type="project" value="TreeGrafter"/>
</dbReference>
<dbReference type="GO" id="GO:0046872">
    <property type="term" value="F:metal ion binding"/>
    <property type="evidence" value="ECO:0007669"/>
    <property type="project" value="UniProtKB-UniRule"/>
</dbReference>
<dbReference type="GO" id="GO:0000166">
    <property type="term" value="F:nucleotide binding"/>
    <property type="evidence" value="ECO:0007669"/>
    <property type="project" value="UniProtKB-KW"/>
</dbReference>
<dbReference type="FunFam" id="3.40.1210.10:FF:000001">
    <property type="entry name" value="5'/3'-nucleotidase SurE"/>
    <property type="match status" value="1"/>
</dbReference>
<dbReference type="Gene3D" id="3.40.1210.10">
    <property type="entry name" value="Survival protein SurE-like phosphatase/nucleotidase"/>
    <property type="match status" value="1"/>
</dbReference>
<dbReference type="HAMAP" id="MF_00060">
    <property type="entry name" value="SurE"/>
    <property type="match status" value="1"/>
</dbReference>
<dbReference type="InterPro" id="IPR030048">
    <property type="entry name" value="SurE"/>
</dbReference>
<dbReference type="InterPro" id="IPR002828">
    <property type="entry name" value="SurE-like_Pase/nucleotidase"/>
</dbReference>
<dbReference type="InterPro" id="IPR036523">
    <property type="entry name" value="SurE-like_sf"/>
</dbReference>
<dbReference type="NCBIfam" id="NF001489">
    <property type="entry name" value="PRK00346.1-3"/>
    <property type="match status" value="1"/>
</dbReference>
<dbReference type="NCBIfam" id="NF001490">
    <property type="entry name" value="PRK00346.1-4"/>
    <property type="match status" value="1"/>
</dbReference>
<dbReference type="NCBIfam" id="TIGR00087">
    <property type="entry name" value="surE"/>
    <property type="match status" value="1"/>
</dbReference>
<dbReference type="PANTHER" id="PTHR30457">
    <property type="entry name" value="5'-NUCLEOTIDASE SURE"/>
    <property type="match status" value="1"/>
</dbReference>
<dbReference type="PANTHER" id="PTHR30457:SF12">
    <property type="entry name" value="5'_3'-NUCLEOTIDASE SURE"/>
    <property type="match status" value="1"/>
</dbReference>
<dbReference type="Pfam" id="PF01975">
    <property type="entry name" value="SurE"/>
    <property type="match status" value="1"/>
</dbReference>
<dbReference type="SUPFAM" id="SSF64167">
    <property type="entry name" value="SurE-like"/>
    <property type="match status" value="1"/>
</dbReference>
<reference key="1">
    <citation type="submission" date="2009-01" db="EMBL/GenBank/DDBJ databases">
        <title>Complete sequence of Diaphorobacter sp. TPSY.</title>
        <authorList>
            <consortium name="US DOE Joint Genome Institute"/>
            <person name="Lucas S."/>
            <person name="Copeland A."/>
            <person name="Lapidus A."/>
            <person name="Glavina del Rio T."/>
            <person name="Tice H."/>
            <person name="Bruce D."/>
            <person name="Goodwin L."/>
            <person name="Pitluck S."/>
            <person name="Chertkov O."/>
            <person name="Brettin T."/>
            <person name="Detter J.C."/>
            <person name="Han C."/>
            <person name="Larimer F."/>
            <person name="Land M."/>
            <person name="Hauser L."/>
            <person name="Kyrpides N."/>
            <person name="Mikhailova N."/>
            <person name="Coates J.D."/>
        </authorList>
    </citation>
    <scope>NUCLEOTIDE SEQUENCE [LARGE SCALE GENOMIC DNA]</scope>
    <source>
        <strain>TPSY</strain>
    </source>
</reference>
<name>SURE_ACIET</name>
<comment type="function">
    <text evidence="1">Nucleotidase that shows phosphatase activity on nucleoside 5'-monophosphates.</text>
</comment>
<comment type="catalytic activity">
    <reaction evidence="1">
        <text>a ribonucleoside 5'-phosphate + H2O = a ribonucleoside + phosphate</text>
        <dbReference type="Rhea" id="RHEA:12484"/>
        <dbReference type="ChEBI" id="CHEBI:15377"/>
        <dbReference type="ChEBI" id="CHEBI:18254"/>
        <dbReference type="ChEBI" id="CHEBI:43474"/>
        <dbReference type="ChEBI" id="CHEBI:58043"/>
        <dbReference type="EC" id="3.1.3.5"/>
    </reaction>
</comment>
<comment type="cofactor">
    <cofactor evidence="1">
        <name>a divalent metal cation</name>
        <dbReference type="ChEBI" id="CHEBI:60240"/>
    </cofactor>
    <text evidence="1">Binds 1 divalent metal cation per subunit.</text>
</comment>
<comment type="subcellular location">
    <subcellularLocation>
        <location evidence="1">Cytoplasm</location>
    </subcellularLocation>
</comment>
<comment type="similarity">
    <text evidence="1">Belongs to the SurE nucleotidase family.</text>
</comment>